<proteinExistence type="evidence at protein level"/>
<feature type="initiator methionine" description="Removed" evidence="11 17">
    <location>
        <position position="1"/>
    </location>
</feature>
<feature type="chain" id="PRO_0000065934" description="Vacuolar transporter chaperone complex subunit 1">
    <location>
        <begin position="2"/>
        <end position="129"/>
    </location>
</feature>
<feature type="topological domain" description="Cytoplasmic" evidence="15">
    <location>
        <begin position="2"/>
        <end position="32"/>
    </location>
</feature>
<feature type="transmembrane region" description="Helical" evidence="1">
    <location>
        <begin position="33"/>
        <end position="53"/>
    </location>
</feature>
<feature type="topological domain" description="Vacuolar" evidence="15">
    <location>
        <begin position="54"/>
        <end position="59"/>
    </location>
</feature>
<feature type="transmembrane region" description="Helical" evidence="1">
    <location>
        <begin position="60"/>
        <end position="80"/>
    </location>
</feature>
<feature type="topological domain" description="Cytoplasmic" evidence="15">
    <location>
        <begin position="81"/>
        <end position="98"/>
    </location>
</feature>
<feature type="transmembrane region" description="Helical" evidence="1">
    <location>
        <begin position="99"/>
        <end position="119"/>
    </location>
</feature>
<feature type="topological domain" description="Vacuolar" evidence="5">
    <location>
        <begin position="120"/>
        <end position="129"/>
    </location>
</feature>
<feature type="modified residue" description="N-acetylserine" evidence="11 17">
    <location>
        <position position="2"/>
    </location>
</feature>
<feature type="strand" evidence="18">
    <location>
        <begin position="6"/>
        <end position="8"/>
    </location>
</feature>
<feature type="helix" evidence="18">
    <location>
        <begin position="23"/>
        <end position="53"/>
    </location>
</feature>
<feature type="helix" evidence="18">
    <location>
        <begin position="56"/>
        <end position="89"/>
    </location>
</feature>
<feature type="helix" evidence="18">
    <location>
        <begin position="99"/>
        <end position="121"/>
    </location>
</feature>
<evidence type="ECO:0000255" key="1"/>
<evidence type="ECO:0000269" key="2">
    <source>
    </source>
</evidence>
<evidence type="ECO:0000269" key="3">
    <source>
    </source>
</evidence>
<evidence type="ECO:0000269" key="4">
    <source>
    </source>
</evidence>
<evidence type="ECO:0000269" key="5">
    <source>
    </source>
</evidence>
<evidence type="ECO:0000269" key="6">
    <source>
    </source>
</evidence>
<evidence type="ECO:0000269" key="7">
    <source>
    </source>
</evidence>
<evidence type="ECO:0000269" key="8">
    <source>
    </source>
</evidence>
<evidence type="ECO:0000269" key="9">
    <source>
    </source>
</evidence>
<evidence type="ECO:0000269" key="10">
    <source>
    </source>
</evidence>
<evidence type="ECO:0000269" key="11">
    <source ref="3"/>
</evidence>
<evidence type="ECO:0000303" key="12">
    <source>
    </source>
</evidence>
<evidence type="ECO:0000303" key="13">
    <source>
    </source>
</evidence>
<evidence type="ECO:0000305" key="14"/>
<evidence type="ECO:0000305" key="15">
    <source>
    </source>
</evidence>
<evidence type="ECO:0000305" key="16">
    <source>
    </source>
</evidence>
<evidence type="ECO:0007744" key="17">
    <source>
    </source>
</evidence>
<evidence type="ECO:0007829" key="18">
    <source>
        <dbReference type="PDB" id="7YTJ"/>
    </source>
</evidence>
<accession>P40046</accession>
<accession>D3DLX7</accession>
<comment type="function">
    <text evidence="2 3 4 5 8 9 16">Accessory subunit of the vacuolar transporter chaperone (VTC) complex. The VTC complex acts as a vacuolar polyphosphate polymerase that catalyzes the synthesis of inorganic polyphosphate (polyP) via transfer of phosphate from ATP to a growing polyP chain, releasing ADP. VTC exposes its catalytic domain VTC4 to the cytosol, where the growing polyP chain winds through a tunnel-shaped pocket, integrating cytoplasmic polymer synthesis with polyP membrane translocation (PubMed:19390046). The VTC complex carries 9 vacuolar transmembrane domains, which are likely to constitute the translocation channel into the organelle lumen (PubMed:19390046, PubMed:25315834). PolyP synthesis is tightly coupled to its transport into the vacuole lumen, in order to avoid otherwise toxic intermediates in the cytosol, and it depends on the proton gradient across the membrane, formed by V-ATPase (PubMed:25315834). VTC1 contributes only 3 transmembrane domains to the complex (Probable). The VTC complex also plays a role in vacuolar membrane fusion (PubMed:10480897, PubMed:11102525, PubMed:11823419, PubMed:12584253). Required for SEC18/NSF activity in SNARE priming, membrane binding of LMA1 and V(0) trans-complex formation (PubMed:11823419).</text>
</comment>
<comment type="subunit">
    <text evidence="4 8 10">The VTC core complex is an integral membrane heterooligomer composed of the catalytic subunit VTC4 and the accessory subunits VTC1, VTC2 and VTC3. The complex exists in 2 different sub-complexes: VTC1-VTC2-VCT4 and VCT1-VTC3-VTC4. The VCT1-VTC3-VTC4 subcomplex is mostly found on the vacuolar membrane. The VTC1-VTC2-VCT4 subcomplex is observed in the cell periphery, probably ER and nuclear envelope, but localizes to the vacuole under phosphate starvation. Each subunit contains 3 transmembrane helices. VTC1 is a small membrane protein without hydrophilic domain. VTC2, VTC3 and VTC4 are related and have 2 hydrophilic domains that face the cytosol, an N-terminal SPX domain and the central core domain. The central core in VTC4 is the catalytic domain, with the essential catalytic lysine replaced by isoleucine and leucine in VTC2 and VTC3, respectively (PubMed:19390046). The core complex associates with the accessory subunit VTC5 (PubMed:27587415). The complex interacts with the v-SNARE NYV1 and with the V(0) subunit of V-ATPase VPH1 (PubMed:11823419).</text>
</comment>
<comment type="interaction">
    <interactant intactId="EBI-20513">
        <id>P40046</id>
    </interactant>
    <interactant intactId="EBI-35465">
        <id>Q12255</id>
        <label>NYV1</label>
    </interactant>
    <organismsDiffer>false</organismsDiffer>
    <experiments>2</experiments>
</comment>
<comment type="subcellular location">
    <subcellularLocation>
        <location evidence="2 5 8">Vacuole membrane</location>
        <topology evidence="2">Multi-pass membrane protein</topology>
    </subcellularLocation>
    <subcellularLocation>
        <location evidence="7 8">Cytoplasm</location>
        <location evidence="7 8">Cell cortex</location>
    </subcellularLocation>
    <subcellularLocation>
        <location evidence="7">Endoplasmic reticulum membrane</location>
        <topology evidence="2">Multi-pass membrane protein</topology>
    </subcellularLocation>
    <subcellularLocation>
        <location evidence="7">Cytoplasmic vesicle</location>
        <location evidence="7">Autophagosome membrane</location>
        <topology evidence="2">Multi-pass membrane protein</topology>
    </subcellularLocation>
</comment>
<comment type="induction">
    <text evidence="3">By low phosphate.</text>
</comment>
<comment type="miscellaneous">
    <text evidence="6">Present with 12074 molecules/cell in log phase SD medium.</text>
</comment>
<comment type="similarity">
    <text evidence="14">Belongs to the VTC1 family.</text>
</comment>
<sequence>MSSAPLLQRTPGKKIALPTRVEPKVFFANERTFLSWLNFTVMLGGLGVGLLNFGDKIGRVSAGLFTFVAMGTMIYALVTYHWRAAAIRRRGSGPYDDRLGPTLLCFFLLVAVIINFILRLKYNDANTKL</sequence>
<gene>
    <name evidence="12" type="primary">VTC1</name>
    <name type="synonym">NRF1</name>
    <name evidence="13" type="synonym">PHM4</name>
    <name type="ordered locus">YER072W</name>
</gene>
<protein>
    <recommendedName>
        <fullName evidence="14">Vacuolar transporter chaperone complex subunit 1</fullName>
    </recommendedName>
    <alternativeName>
        <fullName>Negative regulator of CDC42 protein 1</fullName>
    </alternativeName>
    <alternativeName>
        <fullName evidence="13">Phosphate metabolism protein 4</fullName>
    </alternativeName>
    <alternativeName>
        <fullName evidence="14">SPX-dependent polyphosphate polymerase VTC subunit 1</fullName>
    </alternativeName>
    <alternativeName>
        <fullName evidence="14">Vacuolar membrane polyphosphate polymerase accessory subunit 1</fullName>
        <shortName>PolyP polymerase</shortName>
    </alternativeName>
</protein>
<keyword id="KW-0002">3D-structure</keyword>
<keyword id="KW-0007">Acetylation</keyword>
<keyword id="KW-0143">Chaperone</keyword>
<keyword id="KW-0963">Cytoplasm</keyword>
<keyword id="KW-0968">Cytoplasmic vesicle</keyword>
<keyword id="KW-0903">Direct protein sequencing</keyword>
<keyword id="KW-0256">Endoplasmic reticulum</keyword>
<keyword id="KW-0472">Membrane</keyword>
<keyword id="KW-1185">Reference proteome</keyword>
<keyword id="KW-0812">Transmembrane</keyword>
<keyword id="KW-1133">Transmembrane helix</keyword>
<keyword id="KW-0926">Vacuole</keyword>
<organism>
    <name type="scientific">Saccharomyces cerevisiae (strain ATCC 204508 / S288c)</name>
    <name type="common">Baker's yeast</name>
    <dbReference type="NCBI Taxonomy" id="559292"/>
    <lineage>
        <taxon>Eukaryota</taxon>
        <taxon>Fungi</taxon>
        <taxon>Dikarya</taxon>
        <taxon>Ascomycota</taxon>
        <taxon>Saccharomycotina</taxon>
        <taxon>Saccharomycetes</taxon>
        <taxon>Saccharomycetales</taxon>
        <taxon>Saccharomycetaceae</taxon>
        <taxon>Saccharomyces</taxon>
    </lineage>
</organism>
<dbReference type="EMBL" id="U18813">
    <property type="protein sequence ID" value="AAB64608.1"/>
    <property type="molecule type" value="Genomic_DNA"/>
</dbReference>
<dbReference type="EMBL" id="BK006939">
    <property type="protein sequence ID" value="DAA07731.1"/>
    <property type="molecule type" value="Genomic_DNA"/>
</dbReference>
<dbReference type="PIR" id="S50575">
    <property type="entry name" value="S50575"/>
</dbReference>
<dbReference type="RefSeq" id="NP_010995.1">
    <property type="nucleotide sequence ID" value="NM_001178963.1"/>
</dbReference>
<dbReference type="PDB" id="7YTJ">
    <property type="method" value="EM"/>
    <property type="resolution" value="3.00 A"/>
    <property type="chains" value="A/B/C=2-129"/>
</dbReference>
<dbReference type="PDB" id="8I6V">
    <property type="method" value="EM"/>
    <property type="resolution" value="3.06 A"/>
    <property type="chains" value="A/B/C=1-129"/>
</dbReference>
<dbReference type="PDBsum" id="7YTJ"/>
<dbReference type="PDBsum" id="8I6V"/>
<dbReference type="EMDB" id="EMD-34090"/>
<dbReference type="EMDB" id="EMD-35208"/>
<dbReference type="SMR" id="P40046"/>
<dbReference type="BioGRID" id="36815">
    <property type="interactions" value="182"/>
</dbReference>
<dbReference type="ComplexPortal" id="CPX-784">
    <property type="entry name" value="Vacuolar transporter chaperone complex, VTC3 variant"/>
</dbReference>
<dbReference type="ComplexPortal" id="CPX-8568">
    <property type="entry name" value="Vacuolar transporter chaperone complex, VTC2 variant"/>
</dbReference>
<dbReference type="FunCoup" id="P40046">
    <property type="interactions" value="91"/>
</dbReference>
<dbReference type="IntAct" id="P40046">
    <property type="interactions" value="45"/>
</dbReference>
<dbReference type="MINT" id="P40046"/>
<dbReference type="STRING" id="4932.YER072W"/>
<dbReference type="TCDB" id="9.B.51.1.6">
    <property type="family name" value="the uncharacterized duf202/yidh (yidh) family"/>
</dbReference>
<dbReference type="iPTMnet" id="P40046"/>
<dbReference type="PaxDb" id="4932-YER072W"/>
<dbReference type="PeptideAtlas" id="P40046"/>
<dbReference type="TopDownProteomics" id="P40046"/>
<dbReference type="DNASU" id="856803"/>
<dbReference type="EnsemblFungi" id="YER072W_mRNA">
    <property type="protein sequence ID" value="YER072W"/>
    <property type="gene ID" value="YER072W"/>
</dbReference>
<dbReference type="GeneID" id="856803"/>
<dbReference type="KEGG" id="sce:YER072W"/>
<dbReference type="AGR" id="SGD:S000000874"/>
<dbReference type="SGD" id="S000000874">
    <property type="gene designation" value="VTC1"/>
</dbReference>
<dbReference type="VEuPathDB" id="FungiDB:YER072W"/>
<dbReference type="eggNOG" id="KOG4580">
    <property type="taxonomic scope" value="Eukaryota"/>
</dbReference>
<dbReference type="GeneTree" id="ENSGT00940000176488"/>
<dbReference type="HOGENOM" id="CLU_141247_1_0_1"/>
<dbReference type="InParanoid" id="P40046"/>
<dbReference type="OMA" id="MAIMIYA"/>
<dbReference type="OrthoDB" id="2243669at2759"/>
<dbReference type="BioCyc" id="YEAST:G3O-30244-MONOMER"/>
<dbReference type="BioGRID-ORCS" id="856803">
    <property type="hits" value="2 hits in 10 CRISPR screens"/>
</dbReference>
<dbReference type="PRO" id="PR:P40046"/>
<dbReference type="Proteomes" id="UP000002311">
    <property type="component" value="Chromosome V"/>
</dbReference>
<dbReference type="RNAct" id="P40046">
    <property type="molecule type" value="protein"/>
</dbReference>
<dbReference type="GO" id="GO:0000421">
    <property type="term" value="C:autophagosome membrane"/>
    <property type="evidence" value="ECO:0000303"/>
    <property type="project" value="ComplexPortal"/>
</dbReference>
<dbReference type="GO" id="GO:0005938">
    <property type="term" value="C:cell cortex"/>
    <property type="evidence" value="ECO:0007669"/>
    <property type="project" value="UniProtKB-SubCell"/>
</dbReference>
<dbReference type="GO" id="GO:0031410">
    <property type="term" value="C:cytoplasmic vesicle"/>
    <property type="evidence" value="ECO:0007669"/>
    <property type="project" value="UniProtKB-KW"/>
</dbReference>
<dbReference type="GO" id="GO:0005783">
    <property type="term" value="C:endoplasmic reticulum"/>
    <property type="evidence" value="ECO:0000314"/>
    <property type="project" value="SGD"/>
</dbReference>
<dbReference type="GO" id="GO:0005789">
    <property type="term" value="C:endoplasmic reticulum membrane"/>
    <property type="evidence" value="ECO:0007669"/>
    <property type="project" value="UniProtKB-SubCell"/>
</dbReference>
<dbReference type="GO" id="GO:0000329">
    <property type="term" value="C:fungal-type vacuole membrane"/>
    <property type="evidence" value="ECO:0007005"/>
    <property type="project" value="SGD"/>
</dbReference>
<dbReference type="GO" id="GO:0031965">
    <property type="term" value="C:nuclear membrane"/>
    <property type="evidence" value="ECO:0000314"/>
    <property type="project" value="SGD"/>
</dbReference>
<dbReference type="GO" id="GO:0005774">
    <property type="term" value="C:vacuolar membrane"/>
    <property type="evidence" value="ECO:0000314"/>
    <property type="project" value="SGD"/>
</dbReference>
<dbReference type="GO" id="GO:0033254">
    <property type="term" value="C:vacuolar transporter chaperone complex"/>
    <property type="evidence" value="ECO:0000353"/>
    <property type="project" value="SGD"/>
</dbReference>
<dbReference type="GO" id="GO:0003729">
    <property type="term" value="F:mRNA binding"/>
    <property type="evidence" value="ECO:0000314"/>
    <property type="project" value="SGD"/>
</dbReference>
<dbReference type="GO" id="GO:0061736">
    <property type="term" value="P:engulfment of target by autophagosome"/>
    <property type="evidence" value="ECO:0000303"/>
    <property type="project" value="ComplexPortal"/>
</dbReference>
<dbReference type="GO" id="GO:0016237">
    <property type="term" value="P:microautophagy"/>
    <property type="evidence" value="ECO:0000314"/>
    <property type="project" value="SGD"/>
</dbReference>
<dbReference type="GO" id="GO:0006799">
    <property type="term" value="P:polyphosphate biosynthetic process"/>
    <property type="evidence" value="ECO:0000314"/>
    <property type="project" value="ComplexPortal"/>
</dbReference>
<dbReference type="GO" id="GO:0006797">
    <property type="term" value="P:polyphosphate metabolic process"/>
    <property type="evidence" value="ECO:0000315"/>
    <property type="project" value="SGD"/>
</dbReference>
<dbReference type="GO" id="GO:0007034">
    <property type="term" value="P:vacuolar transport"/>
    <property type="evidence" value="ECO:0000314"/>
    <property type="project" value="SGD"/>
</dbReference>
<dbReference type="GO" id="GO:0042144">
    <property type="term" value="P:vacuole fusion, non-autophagic"/>
    <property type="evidence" value="ECO:0000315"/>
    <property type="project" value="SGD"/>
</dbReference>
<dbReference type="InterPro" id="IPR003807">
    <property type="entry name" value="DUF202"/>
</dbReference>
<dbReference type="InterPro" id="IPR051572">
    <property type="entry name" value="VTC_Complex_Subunit"/>
</dbReference>
<dbReference type="PANTHER" id="PTHR46140">
    <property type="entry name" value="VACUOLAR TRANSPORTER CHAPERONE 1-RELATED"/>
    <property type="match status" value="1"/>
</dbReference>
<dbReference type="PANTHER" id="PTHR46140:SF1">
    <property type="entry name" value="VACUOLAR TRANSPORTER CHAPERONE COMPLEX SUBUNIT 4-RELATED"/>
    <property type="match status" value="1"/>
</dbReference>
<dbReference type="Pfam" id="PF02656">
    <property type="entry name" value="DUF202"/>
    <property type="match status" value="1"/>
</dbReference>
<name>VTC1_YEAST</name>
<reference key="1">
    <citation type="journal article" date="1997" name="Nature">
        <title>The nucleotide sequence of Saccharomyces cerevisiae chromosome V.</title>
        <authorList>
            <person name="Dietrich F.S."/>
            <person name="Mulligan J.T."/>
            <person name="Hennessy K.M."/>
            <person name="Yelton M.A."/>
            <person name="Allen E."/>
            <person name="Araujo R."/>
            <person name="Aviles E."/>
            <person name="Berno A."/>
            <person name="Brennan T."/>
            <person name="Carpenter J."/>
            <person name="Chen E."/>
            <person name="Cherry J.M."/>
            <person name="Chung E."/>
            <person name="Duncan M."/>
            <person name="Guzman E."/>
            <person name="Hartzell G."/>
            <person name="Hunicke-Smith S."/>
            <person name="Hyman R.W."/>
            <person name="Kayser A."/>
            <person name="Komp C."/>
            <person name="Lashkari D."/>
            <person name="Lew H."/>
            <person name="Lin D."/>
            <person name="Mosedale D."/>
            <person name="Nakahara K."/>
            <person name="Namath A."/>
            <person name="Norgren R."/>
            <person name="Oefner P."/>
            <person name="Oh C."/>
            <person name="Petel F.X."/>
            <person name="Roberts D."/>
            <person name="Sehl P."/>
            <person name="Schramm S."/>
            <person name="Shogren T."/>
            <person name="Smith V."/>
            <person name="Taylor P."/>
            <person name="Wei Y."/>
            <person name="Botstein D."/>
            <person name="Davis R.W."/>
        </authorList>
    </citation>
    <scope>NUCLEOTIDE SEQUENCE [LARGE SCALE GENOMIC DNA]</scope>
    <source>
        <strain>ATCC 204508 / S288c</strain>
    </source>
</reference>
<reference key="2">
    <citation type="journal article" date="2014" name="G3 (Bethesda)">
        <title>The reference genome sequence of Saccharomyces cerevisiae: Then and now.</title>
        <authorList>
            <person name="Engel S.R."/>
            <person name="Dietrich F.S."/>
            <person name="Fisk D.G."/>
            <person name="Binkley G."/>
            <person name="Balakrishnan R."/>
            <person name="Costanzo M.C."/>
            <person name="Dwight S.S."/>
            <person name="Hitz B.C."/>
            <person name="Karra K."/>
            <person name="Nash R.S."/>
            <person name="Weng S."/>
            <person name="Wong E.D."/>
            <person name="Lloyd P."/>
            <person name="Skrzypek M.S."/>
            <person name="Miyasato S.R."/>
            <person name="Simison M."/>
            <person name="Cherry J.M."/>
        </authorList>
    </citation>
    <scope>GENOME REANNOTATION</scope>
    <source>
        <strain>ATCC 204508 / S288c</strain>
    </source>
</reference>
<reference key="3">
    <citation type="submission" date="2005-05" db="UniProtKB">
        <authorList>
            <person name="Bienvenut W.V."/>
            <person name="Peters C."/>
        </authorList>
    </citation>
    <scope>PROTEIN SEQUENCE OF 2-9; 14-31 AND 91-98</scope>
    <scope>CLEAVAGE OF INITIATOR METHIONINE</scope>
    <scope>ACETYLATION AT SER-2</scope>
    <scope>IDENTIFICATION BY MASS SPECTROMETRY</scope>
</reference>
<reference key="4">
    <citation type="journal article" date="1999" name="J. Biol. Chem.">
        <title>A novel family of yeast chaperons involved in the distribution of V-ATPase and other membrane proteins.</title>
        <authorList>
            <person name="Cohen A."/>
            <person name="Perzov N."/>
            <person name="Nelson H."/>
            <person name="Nelson N."/>
        </authorList>
    </citation>
    <scope>FUNCTION</scope>
    <scope>SUBCELLULAR LOCATION</scope>
</reference>
<reference key="5">
    <citation type="journal article" date="2000" name="Mol. Biol. Cell">
        <title>New components of a system for phosphate accumulation and polyphosphate metabolism in Saccharomyces cerevisiae revealed by genomic expression analysis.</title>
        <authorList>
            <person name="Ogawa N."/>
            <person name="DeRisi J.L."/>
            <person name="Brown P.O."/>
        </authorList>
    </citation>
    <scope>INDUCTION</scope>
</reference>
<reference key="6">
    <citation type="journal article" date="2002" name="EMBO J.">
        <title>The Vtc proteins in vacuole fusion: coupling NSF activity to V(0) trans-complex formation.</title>
        <authorList>
            <person name="Mueller O."/>
            <person name="Bayer M.J."/>
            <person name="Peters C."/>
            <person name="Andersen J.S."/>
            <person name="Mann M."/>
            <person name="Mayer A."/>
        </authorList>
    </citation>
    <scope>FUNCTION</scope>
    <scope>IDENTIFICATION IN VTC COMPLEX</scope>
    <scope>SUBUNIT</scope>
    <scope>INTERACTION WITH NYV1 AND VPH1</scope>
</reference>
<reference key="7">
    <citation type="journal article" date="2003" name="J. Cell Sci.">
        <title>Role of the Vtc proteins in V-ATPase stability and membrane trafficking.</title>
        <authorList>
            <person name="Mueller O."/>
            <person name="Neumann H."/>
            <person name="Bayer M.J."/>
            <person name="Mayer A."/>
        </authorList>
    </citation>
    <scope>FUNCTION</scope>
    <scope>TOPOLOGY</scope>
    <scope>SUBCELLULAR LOCATION</scope>
</reference>
<reference key="8">
    <citation type="journal article" date="2003" name="Nature">
        <title>Global analysis of protein expression in yeast.</title>
        <authorList>
            <person name="Ghaemmaghami S."/>
            <person name="Huh W.-K."/>
            <person name="Bower K."/>
            <person name="Howson R.W."/>
            <person name="Belle A."/>
            <person name="Dephoure N."/>
            <person name="O'Shea E.K."/>
            <person name="Weissman J.S."/>
        </authorList>
    </citation>
    <scope>LEVEL OF PROTEIN EXPRESSION [LARGE SCALE ANALYSIS]</scope>
</reference>
<reference key="9">
    <citation type="journal article" date="2007" name="Mol. Biol. Cell">
        <title>The vacuolar transporter chaperone (VTC) complex is required for microautophagy.</title>
        <authorList>
            <person name="Uttenweiler A."/>
            <person name="Schwarz H."/>
            <person name="Neumann H."/>
            <person name="Mayer A."/>
        </authorList>
    </citation>
    <scope>FUNCTION</scope>
    <scope>SUBCELLULAR LOCATION</scope>
</reference>
<reference key="10">
    <citation type="journal article" date="2009" name="Science">
        <title>Catalytic core of a membrane-associated eukaryotic polyphosphate polymerase.</title>
        <authorList>
            <person name="Hothorn M."/>
            <person name="Neumann H."/>
            <person name="Lenherr E.D."/>
            <person name="Wehner M."/>
            <person name="Rybin V."/>
            <person name="Hassa P.O."/>
            <person name="Uttenweiler A."/>
            <person name="Reinhardt M."/>
            <person name="Schmidt A."/>
            <person name="Seiler J."/>
            <person name="Ladurner A.G."/>
            <person name="Herrmann C."/>
            <person name="Scheffzek K."/>
            <person name="Mayer A."/>
        </authorList>
    </citation>
    <scope>FUNCTION</scope>
    <scope>SUBUNIT</scope>
    <scope>SUBCELLULAR LOCATION</scope>
</reference>
<reference key="11">
    <citation type="journal article" date="2012" name="Proc. Natl. Acad. Sci. U.S.A.">
        <title>N-terminal acetylome analyses and functional insights of the N-terminal acetyltransferase NatB.</title>
        <authorList>
            <person name="Van Damme P."/>
            <person name="Lasa M."/>
            <person name="Polevoda B."/>
            <person name="Gazquez C."/>
            <person name="Elosegui-Artola A."/>
            <person name="Kim D.S."/>
            <person name="De Juan-Pardo E."/>
            <person name="Demeyer K."/>
            <person name="Hole K."/>
            <person name="Larrea E."/>
            <person name="Timmerman E."/>
            <person name="Prieto J."/>
            <person name="Arnesen T."/>
            <person name="Sherman F."/>
            <person name="Gevaert K."/>
            <person name="Aldabe R."/>
        </authorList>
    </citation>
    <scope>ACETYLATION [LARGE SCALE ANALYSIS] AT SER-2</scope>
    <scope>CLEAVAGE OF INITIATOR METHIONINE [LARGE SCALE ANALYSIS]</scope>
    <scope>IDENTIFICATION BY MASS SPECTROMETRY [LARGE SCALE ANALYSIS]</scope>
</reference>
<reference key="12">
    <citation type="journal article" date="2014" name="J. Cell Sci.">
        <title>Coupled synthesis and translocation restrains polyphosphate to acidocalcisome-like vacuoles and prevents its toxicity.</title>
        <authorList>
            <person name="Gerasimaite R."/>
            <person name="Sharma S."/>
            <person name="Desfougeres Y."/>
            <person name="Schmidt A."/>
            <person name="Mayer A."/>
        </authorList>
    </citation>
    <scope>FUNCTION</scope>
</reference>
<reference key="13">
    <citation type="journal article" date="2016" name="J. Biol. Chem.">
        <title>Vtc5, a novel subunit of the vacuolar transporter chaperone complex, regulates polyphosphate synthesis and phosphate homeostasis in yeast.</title>
        <authorList>
            <person name="Desfougeres Y."/>
            <person name="Gerasimaite R.U."/>
            <person name="Jessen H.J."/>
            <person name="Mayer A."/>
        </authorList>
    </citation>
    <scope>INTERACTION WITH VTC5</scope>
</reference>